<gene>
    <name type="primary">gmk</name>
    <name type="ordered locus">BH2512</name>
</gene>
<proteinExistence type="inferred from homology"/>
<dbReference type="EC" id="2.7.4.8"/>
<dbReference type="EMBL" id="BA000004">
    <property type="protein sequence ID" value="BAB06231.1"/>
    <property type="molecule type" value="Genomic_DNA"/>
</dbReference>
<dbReference type="PIR" id="H83963">
    <property type="entry name" value="H83963"/>
</dbReference>
<dbReference type="RefSeq" id="WP_010898663.1">
    <property type="nucleotide sequence ID" value="NC_002570.2"/>
</dbReference>
<dbReference type="SMR" id="Q9K9Y2"/>
<dbReference type="STRING" id="272558.gene:10728410"/>
<dbReference type="GeneID" id="87598032"/>
<dbReference type="KEGG" id="bha:BH2512"/>
<dbReference type="eggNOG" id="COG0194">
    <property type="taxonomic scope" value="Bacteria"/>
</dbReference>
<dbReference type="HOGENOM" id="CLU_001715_1_2_9"/>
<dbReference type="OrthoDB" id="9808150at2"/>
<dbReference type="Proteomes" id="UP000001258">
    <property type="component" value="Chromosome"/>
</dbReference>
<dbReference type="GO" id="GO:0005829">
    <property type="term" value="C:cytosol"/>
    <property type="evidence" value="ECO:0007669"/>
    <property type="project" value="TreeGrafter"/>
</dbReference>
<dbReference type="GO" id="GO:0005524">
    <property type="term" value="F:ATP binding"/>
    <property type="evidence" value="ECO:0007669"/>
    <property type="project" value="UniProtKB-UniRule"/>
</dbReference>
<dbReference type="GO" id="GO:0004385">
    <property type="term" value="F:guanylate kinase activity"/>
    <property type="evidence" value="ECO:0007669"/>
    <property type="project" value="UniProtKB-UniRule"/>
</dbReference>
<dbReference type="CDD" id="cd00071">
    <property type="entry name" value="GMPK"/>
    <property type="match status" value="1"/>
</dbReference>
<dbReference type="FunFam" id="3.40.50.300:FF:000855">
    <property type="entry name" value="Guanylate kinase"/>
    <property type="match status" value="1"/>
</dbReference>
<dbReference type="FunFam" id="3.30.63.10:FF:000002">
    <property type="entry name" value="Guanylate kinase 1"/>
    <property type="match status" value="1"/>
</dbReference>
<dbReference type="Gene3D" id="3.30.63.10">
    <property type="entry name" value="Guanylate Kinase phosphate binding domain"/>
    <property type="match status" value="1"/>
</dbReference>
<dbReference type="Gene3D" id="3.40.50.300">
    <property type="entry name" value="P-loop containing nucleotide triphosphate hydrolases"/>
    <property type="match status" value="1"/>
</dbReference>
<dbReference type="HAMAP" id="MF_00328">
    <property type="entry name" value="Guanylate_kinase"/>
    <property type="match status" value="1"/>
</dbReference>
<dbReference type="InterPro" id="IPR008145">
    <property type="entry name" value="GK/Ca_channel_bsu"/>
</dbReference>
<dbReference type="InterPro" id="IPR008144">
    <property type="entry name" value="Guanylate_kin-like_dom"/>
</dbReference>
<dbReference type="InterPro" id="IPR017665">
    <property type="entry name" value="Guanylate_kinase"/>
</dbReference>
<dbReference type="InterPro" id="IPR020590">
    <property type="entry name" value="Guanylate_kinase_CS"/>
</dbReference>
<dbReference type="InterPro" id="IPR027417">
    <property type="entry name" value="P-loop_NTPase"/>
</dbReference>
<dbReference type="NCBIfam" id="TIGR03263">
    <property type="entry name" value="guanyl_kin"/>
    <property type="match status" value="1"/>
</dbReference>
<dbReference type="PANTHER" id="PTHR23117:SF13">
    <property type="entry name" value="GUANYLATE KINASE"/>
    <property type="match status" value="1"/>
</dbReference>
<dbReference type="PANTHER" id="PTHR23117">
    <property type="entry name" value="GUANYLATE KINASE-RELATED"/>
    <property type="match status" value="1"/>
</dbReference>
<dbReference type="Pfam" id="PF00625">
    <property type="entry name" value="Guanylate_kin"/>
    <property type="match status" value="1"/>
</dbReference>
<dbReference type="SMART" id="SM00072">
    <property type="entry name" value="GuKc"/>
    <property type="match status" value="1"/>
</dbReference>
<dbReference type="SUPFAM" id="SSF52540">
    <property type="entry name" value="P-loop containing nucleoside triphosphate hydrolases"/>
    <property type="match status" value="1"/>
</dbReference>
<dbReference type="PROSITE" id="PS00856">
    <property type="entry name" value="GUANYLATE_KINASE_1"/>
    <property type="match status" value="1"/>
</dbReference>
<dbReference type="PROSITE" id="PS50052">
    <property type="entry name" value="GUANYLATE_KINASE_2"/>
    <property type="match status" value="1"/>
</dbReference>
<organism>
    <name type="scientific">Halalkalibacterium halodurans (strain ATCC BAA-125 / DSM 18197 / FERM 7344 / JCM 9153 / C-125)</name>
    <name type="common">Bacillus halodurans</name>
    <dbReference type="NCBI Taxonomy" id="272558"/>
    <lineage>
        <taxon>Bacteria</taxon>
        <taxon>Bacillati</taxon>
        <taxon>Bacillota</taxon>
        <taxon>Bacilli</taxon>
        <taxon>Bacillales</taxon>
        <taxon>Bacillaceae</taxon>
        <taxon>Halalkalibacterium (ex Joshi et al. 2022)</taxon>
    </lineage>
</organism>
<comment type="function">
    <text evidence="1">Essential for recycling GMP and indirectly, cGMP.</text>
</comment>
<comment type="catalytic activity">
    <reaction>
        <text>GMP + ATP = GDP + ADP</text>
        <dbReference type="Rhea" id="RHEA:20780"/>
        <dbReference type="ChEBI" id="CHEBI:30616"/>
        <dbReference type="ChEBI" id="CHEBI:58115"/>
        <dbReference type="ChEBI" id="CHEBI:58189"/>
        <dbReference type="ChEBI" id="CHEBI:456216"/>
        <dbReference type="EC" id="2.7.4.8"/>
    </reaction>
</comment>
<comment type="subcellular location">
    <subcellularLocation>
        <location evidence="1">Cytoplasm</location>
    </subcellularLocation>
</comment>
<comment type="similarity">
    <text evidence="2">Belongs to the guanylate kinase family.</text>
</comment>
<protein>
    <recommendedName>
        <fullName>Guanylate kinase</fullName>
        <ecNumber>2.7.4.8</ecNumber>
    </recommendedName>
    <alternativeName>
        <fullName>GMP kinase</fullName>
    </alternativeName>
</protein>
<feature type="chain" id="PRO_0000170495" description="Guanylate kinase">
    <location>
        <begin position="1"/>
        <end position="204"/>
    </location>
</feature>
<feature type="domain" description="Guanylate kinase-like">
    <location>
        <begin position="6"/>
        <end position="184"/>
    </location>
</feature>
<feature type="binding site" evidence="1">
    <location>
        <begin position="13"/>
        <end position="20"/>
    </location>
    <ligand>
        <name>ATP</name>
        <dbReference type="ChEBI" id="CHEBI:30616"/>
    </ligand>
</feature>
<reference key="1">
    <citation type="journal article" date="2000" name="Nucleic Acids Res.">
        <title>Complete genome sequence of the alkaliphilic bacterium Bacillus halodurans and genomic sequence comparison with Bacillus subtilis.</title>
        <authorList>
            <person name="Takami H."/>
            <person name="Nakasone K."/>
            <person name="Takaki Y."/>
            <person name="Maeno G."/>
            <person name="Sasaki R."/>
            <person name="Masui N."/>
            <person name="Fuji F."/>
            <person name="Hirama C."/>
            <person name="Nakamura Y."/>
            <person name="Ogasawara N."/>
            <person name="Kuhara S."/>
            <person name="Horikoshi K."/>
        </authorList>
    </citation>
    <scope>NUCLEOTIDE SEQUENCE [LARGE SCALE GENOMIC DNA]</scope>
    <source>
        <strain>ATCC BAA-125 / DSM 18197 / FERM 7344 / JCM 9153 / C-125</strain>
    </source>
</reference>
<evidence type="ECO:0000250" key="1"/>
<evidence type="ECO:0000305" key="2"/>
<keyword id="KW-0067">ATP-binding</keyword>
<keyword id="KW-0963">Cytoplasm</keyword>
<keyword id="KW-0418">Kinase</keyword>
<keyword id="KW-0547">Nucleotide-binding</keyword>
<keyword id="KW-1185">Reference proteome</keyword>
<keyword id="KW-0808">Transferase</keyword>
<sequence length="204" mass="23407">MEKEKGLLIVLSGPAGVGKGTVCSALRKHDTNIQYSVSATTRAPRKGEVDGVNYFFKSREQFEAMIEKEELLEWAEYVGNYYGTPIQYVRETIDSGKDIILEIEVQGALKVRERFPEGVFIFLMPPSLAELRSRIVGRGTETEEVINKRMNVAKEEIEMMKKYDYVVENDEVELAVDRIKAIVTAEHCKRERLIEKYHQLVEVE</sequence>
<accession>Q9K9Y2</accession>
<name>KGUA_HALH5</name>